<organism>
    <name type="scientific">Danio rerio</name>
    <name type="common">Zebrafish</name>
    <name type="synonym">Brachydanio rerio</name>
    <dbReference type="NCBI Taxonomy" id="7955"/>
    <lineage>
        <taxon>Eukaryota</taxon>
        <taxon>Metazoa</taxon>
        <taxon>Chordata</taxon>
        <taxon>Craniata</taxon>
        <taxon>Vertebrata</taxon>
        <taxon>Euteleostomi</taxon>
        <taxon>Actinopterygii</taxon>
        <taxon>Neopterygii</taxon>
        <taxon>Teleostei</taxon>
        <taxon>Ostariophysi</taxon>
        <taxon>Cypriniformes</taxon>
        <taxon>Danionidae</taxon>
        <taxon>Danioninae</taxon>
        <taxon>Danio</taxon>
    </lineage>
</organism>
<accession>F1QCY8</accession>
<accession>A1YAC7</accession>
<accession>A7E269</accession>
<protein>
    <recommendedName>
        <fullName evidence="6">Spermatogenesis-associated protein 2</fullName>
    </recommendedName>
</protein>
<gene>
    <name evidence="7" type="primary">spata2</name>
</gene>
<keyword id="KW-0963">Cytoplasm</keyword>
<keyword id="KW-1210">Necrosis</keyword>
<keyword id="KW-0539">Nucleus</keyword>
<keyword id="KW-1185">Reference proteome</keyword>
<sequence length="550" mass="60648">MDAKLREDLFRRYVASLENRLEEGAAEGGGDRQGAKTEEALISTATALLGSYQADPGQRFRMLRFYDVVENSLRTQRGTSLRTVGTAFATLETICTNLLLFPWKKEYRCIKTFTGPYVYQLQSVLCDSDLRSLLRSMGYSREQELQYNVRDHPGGASHLRQLAFELLLAQAECRLLGEVVSMSRGFASELEAVELRRNTREDAAGCADALRRRDSLTGDLSRLSVRPLDIDRAHLRRSGRPSKSVDVTDSAGHWHQASKPVLKASLSLRKEPLFVDTEEDMKDEIIRPSPSLYPVAAPPSYSPVADFFPIQSPPSEPYSYHLSSLDEVDLYTERGLGGHQTPSRPPSREPRDSWVLKGHMMKCQGCGMGCPSLSSCQRCDMILCSSCHAVDPAPCCGFQDYTKTSRPLDGYMPIKEKLSVYSSAHSHTHPHPHPLPHAQSHSLLLDKAVMSSKLFPSKPVGSGPSPVGSLVSSGSSSSGGERLSVGGSRCGFCNKPGASHTCVNCSKVSCDTCMSLYASDLCTRKNPHHNFVPNHQLNFKSSTISHLVYR</sequence>
<evidence type="ECO:0000250" key="1">
    <source>
        <dbReference type="UniProtKB" id="Q66HP6"/>
    </source>
</evidence>
<evidence type="ECO:0000250" key="2">
    <source>
        <dbReference type="UniProtKB" id="Q9UM82"/>
    </source>
</evidence>
<evidence type="ECO:0000255" key="3"/>
<evidence type="ECO:0000256" key="4">
    <source>
        <dbReference type="SAM" id="MobiDB-lite"/>
    </source>
</evidence>
<evidence type="ECO:0000269" key="5">
    <source>
    </source>
</evidence>
<evidence type="ECO:0000305" key="6"/>
<evidence type="ECO:0000312" key="7">
    <source>
        <dbReference type="ZFIN" id="ZDB-GENE-070822-5"/>
    </source>
</evidence>
<dbReference type="EMBL" id="DQ869310">
    <property type="protein sequence ID" value="ABI74625.1"/>
    <property type="molecule type" value="mRNA"/>
</dbReference>
<dbReference type="EMBL" id="CR759920">
    <property type="status" value="NOT_ANNOTATED_CDS"/>
    <property type="molecule type" value="Genomic_DNA"/>
</dbReference>
<dbReference type="EMBL" id="BC150216">
    <property type="protein sequence ID" value="AAI50217.1"/>
    <property type="molecule type" value="mRNA"/>
</dbReference>
<dbReference type="RefSeq" id="NP_001073660.2">
    <property type="nucleotide sequence ID" value="NM_001080191.2"/>
</dbReference>
<dbReference type="RefSeq" id="XP_005161965.1">
    <property type="nucleotide sequence ID" value="XM_005161908.5"/>
</dbReference>
<dbReference type="RefSeq" id="XP_005161966.1">
    <property type="nucleotide sequence ID" value="XM_005161909.5"/>
</dbReference>
<dbReference type="SMR" id="F1QCY8"/>
<dbReference type="FunCoup" id="F1QCY8">
    <property type="interactions" value="1487"/>
</dbReference>
<dbReference type="STRING" id="7955.ENSDARP00000086690"/>
<dbReference type="PaxDb" id="7955-ENSDARP00000086690"/>
<dbReference type="Ensembl" id="ENSDART00000092258">
    <property type="protein sequence ID" value="ENSDARP00000086690"/>
    <property type="gene ID" value="ENSDARG00000063250"/>
</dbReference>
<dbReference type="GeneID" id="568830"/>
<dbReference type="KEGG" id="dre:568830"/>
<dbReference type="AGR" id="ZFIN:ZDB-GENE-070822-5"/>
<dbReference type="CTD" id="9825"/>
<dbReference type="ZFIN" id="ZDB-GENE-070822-5">
    <property type="gene designation" value="spata2"/>
</dbReference>
<dbReference type="eggNOG" id="ENOG502QQYQ">
    <property type="taxonomic scope" value="Eukaryota"/>
</dbReference>
<dbReference type="HOGENOM" id="CLU_039585_0_0_1"/>
<dbReference type="InParanoid" id="F1QCY8"/>
<dbReference type="OMA" id="NKQRPIN"/>
<dbReference type="OrthoDB" id="9989817at2759"/>
<dbReference type="TreeFam" id="TF328840"/>
<dbReference type="PRO" id="PR:F1QCY8"/>
<dbReference type="Proteomes" id="UP000000437">
    <property type="component" value="Chromosome 23"/>
</dbReference>
<dbReference type="Bgee" id="ENSDARG00000063250">
    <property type="expression patterns" value="Expressed in retina and 31 other cell types or tissues"/>
</dbReference>
<dbReference type="GO" id="GO:0005737">
    <property type="term" value="C:cytoplasm"/>
    <property type="evidence" value="ECO:0000318"/>
    <property type="project" value="GO_Central"/>
</dbReference>
<dbReference type="GO" id="GO:0005634">
    <property type="term" value="C:nucleus"/>
    <property type="evidence" value="ECO:0007669"/>
    <property type="project" value="UniProtKB-SubCell"/>
</dbReference>
<dbReference type="GO" id="GO:0030159">
    <property type="term" value="F:signaling receptor complex adaptor activity"/>
    <property type="evidence" value="ECO:0000318"/>
    <property type="project" value="GO_Central"/>
</dbReference>
<dbReference type="GO" id="GO:0012501">
    <property type="term" value="P:programmed cell death"/>
    <property type="evidence" value="ECO:0007669"/>
    <property type="project" value="UniProtKB-KW"/>
</dbReference>
<dbReference type="GO" id="GO:0070536">
    <property type="term" value="P:protein K63-linked deubiquitination"/>
    <property type="evidence" value="ECO:0000250"/>
    <property type="project" value="UniProtKB"/>
</dbReference>
<dbReference type="GO" id="GO:1990108">
    <property type="term" value="P:protein linear deubiquitination"/>
    <property type="evidence" value="ECO:0000250"/>
    <property type="project" value="UniProtKB"/>
</dbReference>
<dbReference type="GO" id="GO:0050727">
    <property type="term" value="P:regulation of inflammatory response"/>
    <property type="evidence" value="ECO:0000250"/>
    <property type="project" value="UniProtKB"/>
</dbReference>
<dbReference type="GO" id="GO:0060544">
    <property type="term" value="P:regulation of necroptotic process"/>
    <property type="evidence" value="ECO:0000250"/>
    <property type="project" value="UniProtKB"/>
</dbReference>
<dbReference type="GO" id="GO:0010803">
    <property type="term" value="P:regulation of tumor necrosis factor-mediated signaling pathway"/>
    <property type="evidence" value="ECO:0000250"/>
    <property type="project" value="UniProtKB"/>
</dbReference>
<dbReference type="Gene3D" id="1.20.58.2190">
    <property type="match status" value="1"/>
</dbReference>
<dbReference type="InterPro" id="IPR036339">
    <property type="entry name" value="PUB-like_dom_sf"/>
</dbReference>
<dbReference type="InterPro" id="IPR048839">
    <property type="entry name" value="SPATA2_PUB-like"/>
</dbReference>
<dbReference type="PANTHER" id="PTHR15326:SF8">
    <property type="entry name" value="SPERMATOGENESIS-ASSOCIATED PROTEIN 2"/>
    <property type="match status" value="1"/>
</dbReference>
<dbReference type="PANTHER" id="PTHR15326">
    <property type="entry name" value="SPERMATOGENESIS-ASSOCIATED PROTEIN 2/TAMOZHENNIC"/>
    <property type="match status" value="1"/>
</dbReference>
<dbReference type="Pfam" id="PF21388">
    <property type="entry name" value="SPATA2_PUB-like"/>
    <property type="match status" value="1"/>
</dbReference>
<dbReference type="SUPFAM" id="SSF143503">
    <property type="entry name" value="PUG domain-like"/>
    <property type="match status" value="1"/>
</dbReference>
<feature type="chain" id="PRO_0000445576" description="Spermatogenesis-associated protein 2">
    <location>
        <begin position="1"/>
        <end position="550"/>
    </location>
</feature>
<feature type="domain" description="PUB" evidence="3">
    <location>
        <begin position="83"/>
        <end position="156"/>
    </location>
</feature>
<feature type="region of interest" description="Disordered" evidence="4">
    <location>
        <begin position="457"/>
        <end position="480"/>
    </location>
</feature>
<feature type="short sequence motif" description="PIM motif" evidence="2">
    <location>
        <begin position="320"/>
        <end position="337"/>
    </location>
</feature>
<feature type="sequence conflict" description="In Ref. 1; ABI74625." evidence="6" ref="1">
    <original>DVTDSAGHWHQASKPVLKAS</original>
    <variation>RPLDIDRAHLRRSGRPSKSA</variation>
    <location>
        <begin position="246"/>
        <end position="265"/>
    </location>
</feature>
<feature type="sequence conflict" description="In Ref. 3; AAI50217." evidence="6" ref="3">
    <original>A</original>
    <variation>V</variation>
    <location>
        <position position="297"/>
    </location>
</feature>
<comment type="function">
    <text evidence="2">Bridging factor that mediates the recruitment of cyld to the LUBAC complex, thereby regulating TNF-alpha-induced necroptosis. Required to activate the 'Met-1'- (linear) and 'Lys-63'-linked deubiquitinase activities of cyld.</text>
</comment>
<comment type="subcellular location">
    <subcellularLocation>
        <location evidence="2">Cytoplasm</location>
    </subcellularLocation>
    <subcellularLocation>
        <location evidence="1">Nucleus</location>
    </subcellularLocation>
</comment>
<comment type="developmental stage">
    <text evidence="5">Expressed both maternally and zygotically. Detected at two-cell stage. Ubiquitously expressed from the shield stage to 24 hours post-fertilization (hpf), and then becomes preferentially expressed in the central nervous system. From 5 days post-fertilization (dpf), expression becomes detectable in the gut and pronephric duct epithelium.</text>
</comment>
<comment type="similarity">
    <text evidence="6">Belongs to the SPATA2 family.</text>
</comment>
<name>SPAT2_DANRE</name>
<proteinExistence type="evidence at transcript level"/>
<reference key="1">
    <citation type="journal article" date="2007" name="Int. J. Dev. Biol.">
        <title>Zebrafish spata2 is expressed at early developmental stages.</title>
        <authorList>
            <person name="Moro E."/>
            <person name="Maran C."/>
            <person name="Slongo M.L."/>
            <person name="Argenton F."/>
            <person name="Toppo S."/>
            <person name="Onisto M."/>
        </authorList>
    </citation>
    <scope>NUCLEOTIDE SEQUENCE [MRNA]</scope>
    <scope>DEVELOPMENTAL STAGE</scope>
</reference>
<reference key="2">
    <citation type="journal article" date="2013" name="Nature">
        <title>The zebrafish reference genome sequence and its relationship to the human genome.</title>
        <authorList>
            <person name="Howe K."/>
            <person name="Clark M.D."/>
            <person name="Torroja C.F."/>
            <person name="Torrance J."/>
            <person name="Berthelot C."/>
            <person name="Muffato M."/>
            <person name="Collins J.E."/>
            <person name="Humphray S."/>
            <person name="McLaren K."/>
            <person name="Matthews L."/>
            <person name="McLaren S."/>
            <person name="Sealy I."/>
            <person name="Caccamo M."/>
            <person name="Churcher C."/>
            <person name="Scott C."/>
            <person name="Barrett J.C."/>
            <person name="Koch R."/>
            <person name="Rauch G.J."/>
            <person name="White S."/>
            <person name="Chow W."/>
            <person name="Kilian B."/>
            <person name="Quintais L.T."/>
            <person name="Guerra-Assuncao J.A."/>
            <person name="Zhou Y."/>
            <person name="Gu Y."/>
            <person name="Yen J."/>
            <person name="Vogel J.H."/>
            <person name="Eyre T."/>
            <person name="Redmond S."/>
            <person name="Banerjee R."/>
            <person name="Chi J."/>
            <person name="Fu B."/>
            <person name="Langley E."/>
            <person name="Maguire S.F."/>
            <person name="Laird G.K."/>
            <person name="Lloyd D."/>
            <person name="Kenyon E."/>
            <person name="Donaldson S."/>
            <person name="Sehra H."/>
            <person name="Almeida-King J."/>
            <person name="Loveland J."/>
            <person name="Trevanion S."/>
            <person name="Jones M."/>
            <person name="Quail M."/>
            <person name="Willey D."/>
            <person name="Hunt A."/>
            <person name="Burton J."/>
            <person name="Sims S."/>
            <person name="McLay K."/>
            <person name="Plumb B."/>
            <person name="Davis J."/>
            <person name="Clee C."/>
            <person name="Oliver K."/>
            <person name="Clark R."/>
            <person name="Riddle C."/>
            <person name="Elliot D."/>
            <person name="Threadgold G."/>
            <person name="Harden G."/>
            <person name="Ware D."/>
            <person name="Begum S."/>
            <person name="Mortimore B."/>
            <person name="Kerry G."/>
            <person name="Heath P."/>
            <person name="Phillimore B."/>
            <person name="Tracey A."/>
            <person name="Corby N."/>
            <person name="Dunn M."/>
            <person name="Johnson C."/>
            <person name="Wood J."/>
            <person name="Clark S."/>
            <person name="Pelan S."/>
            <person name="Griffiths G."/>
            <person name="Smith M."/>
            <person name="Glithero R."/>
            <person name="Howden P."/>
            <person name="Barker N."/>
            <person name="Lloyd C."/>
            <person name="Stevens C."/>
            <person name="Harley J."/>
            <person name="Holt K."/>
            <person name="Panagiotidis G."/>
            <person name="Lovell J."/>
            <person name="Beasley H."/>
            <person name="Henderson C."/>
            <person name="Gordon D."/>
            <person name="Auger K."/>
            <person name="Wright D."/>
            <person name="Collins J."/>
            <person name="Raisen C."/>
            <person name="Dyer L."/>
            <person name="Leung K."/>
            <person name="Robertson L."/>
            <person name="Ambridge K."/>
            <person name="Leongamornlert D."/>
            <person name="McGuire S."/>
            <person name="Gilderthorp R."/>
            <person name="Griffiths C."/>
            <person name="Manthravadi D."/>
            <person name="Nichol S."/>
            <person name="Barker G."/>
            <person name="Whitehead S."/>
            <person name="Kay M."/>
            <person name="Brown J."/>
            <person name="Murnane C."/>
            <person name="Gray E."/>
            <person name="Humphries M."/>
            <person name="Sycamore N."/>
            <person name="Barker D."/>
            <person name="Saunders D."/>
            <person name="Wallis J."/>
            <person name="Babbage A."/>
            <person name="Hammond S."/>
            <person name="Mashreghi-Mohammadi M."/>
            <person name="Barr L."/>
            <person name="Martin S."/>
            <person name="Wray P."/>
            <person name="Ellington A."/>
            <person name="Matthews N."/>
            <person name="Ellwood M."/>
            <person name="Woodmansey R."/>
            <person name="Clark G."/>
            <person name="Cooper J."/>
            <person name="Tromans A."/>
            <person name="Grafham D."/>
            <person name="Skuce C."/>
            <person name="Pandian R."/>
            <person name="Andrews R."/>
            <person name="Harrison E."/>
            <person name="Kimberley A."/>
            <person name="Garnett J."/>
            <person name="Fosker N."/>
            <person name="Hall R."/>
            <person name="Garner P."/>
            <person name="Kelly D."/>
            <person name="Bird C."/>
            <person name="Palmer S."/>
            <person name="Gehring I."/>
            <person name="Berger A."/>
            <person name="Dooley C.M."/>
            <person name="Ersan-Urun Z."/>
            <person name="Eser C."/>
            <person name="Geiger H."/>
            <person name="Geisler M."/>
            <person name="Karotki L."/>
            <person name="Kirn A."/>
            <person name="Konantz J."/>
            <person name="Konantz M."/>
            <person name="Oberlander M."/>
            <person name="Rudolph-Geiger S."/>
            <person name="Teucke M."/>
            <person name="Lanz C."/>
            <person name="Raddatz G."/>
            <person name="Osoegawa K."/>
            <person name="Zhu B."/>
            <person name="Rapp A."/>
            <person name="Widaa S."/>
            <person name="Langford C."/>
            <person name="Yang F."/>
            <person name="Schuster S.C."/>
            <person name="Carter N.P."/>
            <person name="Harrow J."/>
            <person name="Ning Z."/>
            <person name="Herrero J."/>
            <person name="Searle S.M."/>
            <person name="Enright A."/>
            <person name="Geisler R."/>
            <person name="Plasterk R.H."/>
            <person name="Lee C."/>
            <person name="Westerfield M."/>
            <person name="de Jong P.J."/>
            <person name="Zon L.I."/>
            <person name="Postlethwait J.H."/>
            <person name="Nusslein-Volhard C."/>
            <person name="Hubbard T.J."/>
            <person name="Roest Crollius H."/>
            <person name="Rogers J."/>
            <person name="Stemple D.L."/>
        </authorList>
    </citation>
    <scope>NUCLEOTIDE SEQUENCE [LARGE SCALE GENOMIC DNA]</scope>
    <source>
        <strain>Tuebingen</strain>
    </source>
</reference>
<reference key="3">
    <citation type="submission" date="2007-07" db="EMBL/GenBank/DDBJ databases">
        <authorList>
            <consortium name="NIH - Zebrafish Gene Collection (ZGC) project"/>
        </authorList>
    </citation>
    <scope>NUCLEOTIDE SEQUENCE [LARGE SCALE MRNA]</scope>
    <source>
        <tissue>Intestine</tissue>
    </source>
</reference>